<feature type="chain" id="PRO_0000437491" description="Segment polarity protein dishevelled homolog mig-5" evidence="13">
    <location>
        <begin position="1"/>
        <end position="672"/>
    </location>
</feature>
<feature type="domain" description="DIX" evidence="2">
    <location>
        <begin position="9"/>
        <end position="91"/>
    </location>
</feature>
<feature type="domain" description="PDZ" evidence="3">
    <location>
        <begin position="226"/>
        <end position="294"/>
    </location>
</feature>
<feature type="domain" description="DEP" evidence="1">
    <location>
        <begin position="427"/>
        <end position="501"/>
    </location>
</feature>
<feature type="region of interest" description="Disordered" evidence="4">
    <location>
        <begin position="97"/>
        <end position="127"/>
    </location>
</feature>
<feature type="region of interest" description="Disordered" evidence="4">
    <location>
        <begin position="150"/>
        <end position="174"/>
    </location>
</feature>
<feature type="region of interest" description="Disordered" evidence="4">
    <location>
        <begin position="187"/>
        <end position="215"/>
    </location>
</feature>
<feature type="region of interest" description="Disordered" evidence="4">
    <location>
        <begin position="604"/>
        <end position="672"/>
    </location>
</feature>
<feature type="compositionally biased region" description="Polar residues" evidence="4">
    <location>
        <begin position="98"/>
        <end position="108"/>
    </location>
</feature>
<feature type="compositionally biased region" description="Basic and acidic residues" evidence="4">
    <location>
        <begin position="160"/>
        <end position="169"/>
    </location>
</feature>
<feature type="compositionally biased region" description="Basic residues" evidence="4">
    <location>
        <begin position="191"/>
        <end position="202"/>
    </location>
</feature>
<feature type="compositionally biased region" description="Polar residues" evidence="4">
    <location>
        <begin position="660"/>
        <end position="672"/>
    </location>
</feature>
<feature type="splice variant" id="VSP_058543" description="In isoform c." evidence="13">
    <location>
        <begin position="300"/>
        <end position="340"/>
    </location>
</feature>
<feature type="splice variant" id="VSP_058544" description="In isoform b and isoform c." evidence="13">
    <original>GSGGLGGPPPTPLSSTMVLAASPIQSQNAVNHDFDGENSSNSRTRILRT</original>
    <variation>VTNSRKWWLRRPSADSSIQYYGSSSFSDSVAERSQPRFRRGEQ</variation>
    <location>
        <begin position="624"/>
        <end position="672"/>
    </location>
</feature>
<evidence type="ECO:0000255" key="1">
    <source>
        <dbReference type="PROSITE-ProRule" id="PRU00066"/>
    </source>
</evidence>
<evidence type="ECO:0000255" key="2">
    <source>
        <dbReference type="PROSITE-ProRule" id="PRU00069"/>
    </source>
</evidence>
<evidence type="ECO:0000255" key="3">
    <source>
        <dbReference type="PROSITE-ProRule" id="PRU00143"/>
    </source>
</evidence>
<evidence type="ECO:0000256" key="4">
    <source>
        <dbReference type="SAM" id="MobiDB-lite"/>
    </source>
</evidence>
<evidence type="ECO:0000269" key="5">
    <source>
    </source>
</evidence>
<evidence type="ECO:0000269" key="6">
    <source>
    </source>
</evidence>
<evidence type="ECO:0000269" key="7">
    <source>
    </source>
</evidence>
<evidence type="ECO:0000269" key="8">
    <source>
    </source>
</evidence>
<evidence type="ECO:0000269" key="9">
    <source>
    </source>
</evidence>
<evidence type="ECO:0000269" key="10">
    <source>
    </source>
</evidence>
<evidence type="ECO:0000269" key="11">
    <source>
    </source>
</evidence>
<evidence type="ECO:0000269" key="12">
    <source>
    </source>
</evidence>
<evidence type="ECO:0000305" key="13"/>
<evidence type="ECO:0000312" key="14">
    <source>
        <dbReference type="Proteomes" id="UP000001940"/>
    </source>
</evidence>
<evidence type="ECO:0000312" key="15">
    <source>
        <dbReference type="WormBase" id="T05C12.6a"/>
    </source>
</evidence>
<evidence type="ECO:0000312" key="16">
    <source>
        <dbReference type="WormBase" id="T05C12.6b"/>
    </source>
</evidence>
<evidence type="ECO:0000312" key="17">
    <source>
        <dbReference type="WormBase" id="T05C12.6c"/>
    </source>
</evidence>
<name>MIG5_CAEEL</name>
<gene>
    <name evidence="15" type="primary">mig-5</name>
    <name evidence="15" type="ORF">T05C12.6</name>
</gene>
<keyword id="KW-0025">Alternative splicing</keyword>
<keyword id="KW-0965">Cell junction</keyword>
<keyword id="KW-1003">Cell membrane</keyword>
<keyword id="KW-0963">Cytoplasm</keyword>
<keyword id="KW-0217">Developmental protein</keyword>
<keyword id="KW-0472">Membrane</keyword>
<keyword id="KW-1185">Reference proteome</keyword>
<keyword id="KW-0879">Wnt signaling pathway</keyword>
<protein>
    <recommendedName>
        <fullName evidence="13">Segment polarity protein dishevelled homolog mig-5</fullName>
    </recommendedName>
    <alternativeName>
        <fullName evidence="15">Abnormal cell migration protein 5</fullName>
    </alternativeName>
</protein>
<proteinExistence type="evidence at protein level"/>
<sequence>MEPPCTSDCSQIKVFYYLDDETTPYVSVIEAREGVATLGNFKNSFTKRGYKYYAKELDPDIQREVKVELTTDSDRLRKSQNGFYEIFLVSTPGYGTLPRNSGTMTRPQRTALDKRRRRSADFDATPYSDASLAPSTIVSRRAGEHLAELYTSNSEDPYQYDEHTRRTGDDSSLYEPLAARDMNKIYDDDRRRKKQKKERFRRPYVPSTISSATESSVNSGLPRILEIYLPMKNVPYLGLSVCTIDGHIFVSEIAPEGAVEKDGRVNVGDQILQVNRVSFEELSGPQAVRSLREAASSKRPITLYISKFARGAPSEYDDPLASMASETMPLDVGVWVETAVQNTEKMKALGLDPQEQTATTIDDGTLPFTSTASDDEERMLYDQRRNGIPRALIEEAERKRENEQNEKIEQLTEMIDPIIVVRSMARPDSGLAVKNRKWLKILVPMSFIGRDLVDWLVDHMADIHNRKKARIYAARLLAAGLIRHVVSKLTFTEKCYYVFGDGILGNDRNSTDTTGTSGTTMRVEATTEVTYVGSPAPHALAARVGRNIPHRLETTTLSPVAHDQTWLRRRRDCESPMTNDYASMVGESQIGMNPVGNYHVFGTKNNHRQVPAPSQVTSSSLTNGSGGLGGPPPTPLSSTMVLAASPIQSQNAVNHDFDGENSSNSRTRILRT</sequence>
<organism evidence="14">
    <name type="scientific">Caenorhabditis elegans</name>
    <dbReference type="NCBI Taxonomy" id="6239"/>
    <lineage>
        <taxon>Eukaryota</taxon>
        <taxon>Metazoa</taxon>
        <taxon>Ecdysozoa</taxon>
        <taxon>Nematoda</taxon>
        <taxon>Chromadorea</taxon>
        <taxon>Rhabditida</taxon>
        <taxon>Rhabditina</taxon>
        <taxon>Rhabditomorpha</taxon>
        <taxon>Rhabditoidea</taxon>
        <taxon>Rhabditidae</taxon>
        <taxon>Peloderinae</taxon>
        <taxon>Caenorhabditis</taxon>
    </lineage>
</organism>
<reference evidence="13" key="1">
    <citation type="journal article" date="2006" name="Dev. Biol.">
        <title>mig-5/Dsh controls cell fate determination and cell migration in C. elegans.</title>
        <authorList>
            <person name="Walston T."/>
            <person name="Guo C."/>
            <person name="Proenca R."/>
            <person name="Wu M."/>
            <person name="Herman M."/>
            <person name="Hardin J."/>
            <person name="Hedgecock E."/>
        </authorList>
    </citation>
    <scope>NUCLEOTIDE SEQUENCE [MRNA] (ISOFORM B)</scope>
    <scope>NUCLEOTIDE SEQUENCE [MRNA] OF 72-625 (ISOFORM C)</scope>
    <scope>FUNCTION</scope>
    <scope>SUBCELLULAR LOCATION</scope>
    <scope>DEVELOPMENTAL STAGE</scope>
    <scope>DISRUPTION PHENOTYPE</scope>
</reference>
<reference evidence="14" key="2">
    <citation type="journal article" date="1998" name="Science">
        <title>Genome sequence of the nematode C. elegans: a platform for investigating biology.</title>
        <authorList>
            <consortium name="The C. elegans sequencing consortium"/>
        </authorList>
    </citation>
    <scope>NUCLEOTIDE SEQUENCE [LARGE SCALE GENOMIC DNA]</scope>
    <source>
        <strain evidence="14">Bristol N2</strain>
    </source>
</reference>
<reference evidence="13" key="3">
    <citation type="journal article" date="2006" name="Dev. Biol.">
        <title>A novel noncanonical Wnt pathway is involved in the regulation of the asymmetric B cell division in C. elegans.</title>
        <authorList>
            <person name="Wu M."/>
            <person name="Herman M.A."/>
        </authorList>
    </citation>
    <scope>FUNCTION</scope>
</reference>
<reference evidence="13" key="4">
    <citation type="journal article" date="2007" name="Dev. Biol.">
        <title>Asymmetric localizations of LIN-17/Fz and MIG-5/Dsh are involved in the asymmetric B cell division in C. elegans.</title>
        <authorList>
            <person name="Wu M."/>
            <person name="Herman M.A."/>
        </authorList>
    </citation>
    <scope>FUNCTION</scope>
    <scope>SUBCELLULAR LOCATION</scope>
    <scope>DOMAIN</scope>
    <scope>DISRUPTION PHENOTYPE</scope>
</reference>
<reference evidence="13" key="5">
    <citation type="journal article" date="2009" name="Dev. Biol.">
        <title>The N- or C-terminal domains of DSH-2 can activate the C. elegans Wnt/beta-catenin asymmetry pathway.</title>
        <authorList>
            <person name="King R.S."/>
            <person name="Maiden S.L."/>
            <person name="Hawkins N.C."/>
            <person name="Kidd A.R. III"/>
            <person name="Kimble J."/>
            <person name="Hardin J."/>
            <person name="Walston T.D."/>
        </authorList>
    </citation>
    <scope>FUNCTION</scope>
</reference>
<reference evidence="13" key="6">
    <citation type="journal article" date="2009" name="PLoS ONE">
        <title>A beta-catenin-dependent Wnt pathway mediates anteroposterior axon guidance in C. elegans motor neurons.</title>
        <authorList>
            <person name="Maro G.S."/>
            <person name="Klassen M.P."/>
            <person name="Shen K."/>
        </authorList>
    </citation>
    <scope>FUNCTION</scope>
</reference>
<reference evidence="13" key="7">
    <citation type="journal article" date="2014" name="Development">
        <title>Syndecan defines precise spindle orientation by modulating Wnt signaling in C. elegans.</title>
        <authorList>
            <person name="Dejima K."/>
            <person name="Kang S."/>
            <person name="Mitani S."/>
            <person name="Cosman P.C."/>
            <person name="Chisholm A.D."/>
        </authorList>
    </citation>
    <scope>FUNCTION</scope>
    <scope>SUBCELLULAR LOCATION</scope>
</reference>
<reference evidence="13" key="8">
    <citation type="journal article" date="2015" name="Proc. Natl. Acad. Sci. U.S.A.">
        <title>Dishevelled attenuates the repelling activity of Wnt signaling during neurite outgrowth in Caenorhabditis elegans.</title>
        <authorList>
            <person name="Zheng C."/>
            <person name="Diaz-Cuadros M."/>
            <person name="Chalfie M."/>
        </authorList>
    </citation>
    <scope>FUNCTION</scope>
</reference>
<reference evidence="13" key="9">
    <citation type="journal article" date="2016" name="J. Cell Sci.">
        <title>Unique and redundant beta-catenin regulatory roles of two Dishevelled paralogs during C. elegans asymmetric cell division.</title>
        <authorList>
            <person name="Baldwin A.T."/>
            <person name="Clemons A.M."/>
            <person name="Phillips B.T."/>
        </authorList>
    </citation>
    <scope>FUNCTION</scope>
    <scope>SUBCELLULAR LOCATION</scope>
    <scope>DISRUPTION PHENOTYPE</scope>
</reference>
<dbReference type="EMBL" id="AF063244">
    <property type="protein sequence ID" value="AAC16434.1"/>
    <property type="molecule type" value="mRNA"/>
</dbReference>
<dbReference type="EMBL" id="AF070920">
    <property type="protein sequence ID" value="AAC24231.1"/>
    <property type="molecule type" value="mRNA"/>
</dbReference>
<dbReference type="EMBL" id="BX284602">
    <property type="protein sequence ID" value="CAA91307.1"/>
    <property type="molecule type" value="Genomic_DNA"/>
</dbReference>
<dbReference type="EMBL" id="BX284602">
    <property type="protein sequence ID" value="CAB61022.1"/>
    <property type="molecule type" value="Genomic_DNA"/>
</dbReference>
<dbReference type="EMBL" id="BX284602">
    <property type="protein sequence ID" value="CAC42334.1"/>
    <property type="molecule type" value="Genomic_DNA"/>
</dbReference>
<dbReference type="PIR" id="T24507">
    <property type="entry name" value="T24507"/>
</dbReference>
<dbReference type="PIR" id="T43171">
    <property type="entry name" value="T43171"/>
</dbReference>
<dbReference type="PIR" id="T43211">
    <property type="entry name" value="T43211"/>
</dbReference>
<dbReference type="RefSeq" id="NP_001022316.1">
    <molecule id="Q22227-1"/>
    <property type="nucleotide sequence ID" value="NM_001027145.4"/>
</dbReference>
<dbReference type="RefSeq" id="NP_001022317.1">
    <molecule id="Q22227-2"/>
    <property type="nucleotide sequence ID" value="NM_001027146.3"/>
</dbReference>
<dbReference type="RefSeq" id="NP_001022318.1">
    <molecule id="Q22227-3"/>
    <property type="nucleotide sequence ID" value="NM_001027147.5"/>
</dbReference>
<dbReference type="SMR" id="Q22227"/>
<dbReference type="DIP" id="DIP-27038N"/>
<dbReference type="FunCoup" id="Q22227">
    <property type="interactions" value="481"/>
</dbReference>
<dbReference type="IntAct" id="Q22227">
    <property type="interactions" value="98"/>
</dbReference>
<dbReference type="MINT" id="Q22227"/>
<dbReference type="STRING" id="6239.T05C12.6a.1"/>
<dbReference type="PaxDb" id="6239-T05C12.6a"/>
<dbReference type="EnsemblMetazoa" id="T05C12.6a.1">
    <molecule id="Q22227-1"/>
    <property type="protein sequence ID" value="T05C12.6a.1"/>
    <property type="gene ID" value="WBGene00003241"/>
</dbReference>
<dbReference type="EnsemblMetazoa" id="T05C12.6b.1">
    <molecule id="Q22227-2"/>
    <property type="protein sequence ID" value="T05C12.6b.1"/>
    <property type="gene ID" value="WBGene00003241"/>
</dbReference>
<dbReference type="EnsemblMetazoa" id="T05C12.6c.1">
    <molecule id="Q22227-3"/>
    <property type="protein sequence ID" value="T05C12.6c.1"/>
    <property type="gene ID" value="WBGene00003241"/>
</dbReference>
<dbReference type="GeneID" id="174317"/>
<dbReference type="KEGG" id="cel:CELE_T05C12.6"/>
<dbReference type="UCSC" id="T05C12.6b">
    <property type="organism name" value="c. elegans"/>
</dbReference>
<dbReference type="AGR" id="WB:WBGene00003241"/>
<dbReference type="CTD" id="174317"/>
<dbReference type="WormBase" id="T05C12.6a">
    <molecule id="Q22227-1"/>
    <property type="protein sequence ID" value="CE02318"/>
    <property type="gene ID" value="WBGene00003241"/>
    <property type="gene designation" value="mig-5"/>
</dbReference>
<dbReference type="WormBase" id="T05C12.6b">
    <molecule id="Q22227-2"/>
    <property type="protein sequence ID" value="CE25100"/>
    <property type="gene ID" value="WBGene00003241"/>
    <property type="gene designation" value="mig-5"/>
</dbReference>
<dbReference type="WormBase" id="T05C12.6c">
    <molecule id="Q22227-3"/>
    <property type="protein sequence ID" value="CE28076"/>
    <property type="gene ID" value="WBGene00003241"/>
    <property type="gene designation" value="mig-5"/>
</dbReference>
<dbReference type="eggNOG" id="KOG3571">
    <property type="taxonomic scope" value="Eukaryota"/>
</dbReference>
<dbReference type="GeneTree" id="ENSGT00950000182903"/>
<dbReference type="HOGENOM" id="CLU_012601_2_0_1"/>
<dbReference type="InParanoid" id="Q22227"/>
<dbReference type="OMA" id="TKVYYYL"/>
<dbReference type="OrthoDB" id="10031689at2759"/>
<dbReference type="PhylomeDB" id="Q22227"/>
<dbReference type="Reactome" id="R-CEL-201688">
    <property type="pathway name" value="WNT mediated activation of DVL"/>
</dbReference>
<dbReference type="Reactome" id="R-CEL-2028269">
    <property type="pathway name" value="Signaling by Hippo"/>
</dbReference>
<dbReference type="Reactome" id="R-CEL-4086400">
    <property type="pathway name" value="PCP/CE pathway"/>
</dbReference>
<dbReference type="Reactome" id="R-CEL-4641258">
    <property type="pathway name" value="Degradation of DVL"/>
</dbReference>
<dbReference type="Reactome" id="R-CEL-4641262">
    <property type="pathway name" value="Disassembly of the destruction complex and recruitment of AXIN to the membrane"/>
</dbReference>
<dbReference type="Reactome" id="R-CEL-5099900">
    <property type="pathway name" value="WNT5A-dependent internalization of FZD4"/>
</dbReference>
<dbReference type="Reactome" id="R-CEL-5663220">
    <property type="pathway name" value="RHO GTPases Activate Formins"/>
</dbReference>
<dbReference type="Reactome" id="R-CEL-8856825">
    <property type="pathway name" value="Cargo recognition for clathrin-mediated endocytosis"/>
</dbReference>
<dbReference type="Reactome" id="R-CEL-8856828">
    <property type="pathway name" value="Clathrin-mediated endocytosis"/>
</dbReference>
<dbReference type="SignaLink" id="Q22227"/>
<dbReference type="PRO" id="PR:Q22227"/>
<dbReference type="Proteomes" id="UP000001940">
    <property type="component" value="Chromosome II"/>
</dbReference>
<dbReference type="Bgee" id="WBGene00003241">
    <property type="expression patterns" value="Expressed in germ line (C elegans) and 4 other cell types or tissues"/>
</dbReference>
<dbReference type="GO" id="GO:0070161">
    <property type="term" value="C:anchoring junction"/>
    <property type="evidence" value="ECO:0007669"/>
    <property type="project" value="UniProtKB-SubCell"/>
</dbReference>
<dbReference type="GO" id="GO:0005938">
    <property type="term" value="C:cell cortex"/>
    <property type="evidence" value="ECO:0000314"/>
    <property type="project" value="WormBase"/>
</dbReference>
<dbReference type="GO" id="GO:0005737">
    <property type="term" value="C:cytoplasm"/>
    <property type="evidence" value="ECO:0000314"/>
    <property type="project" value="WormBase"/>
</dbReference>
<dbReference type="GO" id="GO:0005829">
    <property type="term" value="C:cytosol"/>
    <property type="evidence" value="ECO:0000318"/>
    <property type="project" value="GO_Central"/>
</dbReference>
<dbReference type="GO" id="GO:0005886">
    <property type="term" value="C:plasma membrane"/>
    <property type="evidence" value="ECO:0007669"/>
    <property type="project" value="UniProtKB-SubCell"/>
</dbReference>
<dbReference type="GO" id="GO:0005109">
    <property type="term" value="F:frizzled binding"/>
    <property type="evidence" value="ECO:0000318"/>
    <property type="project" value="GO_Central"/>
</dbReference>
<dbReference type="GO" id="GO:0035591">
    <property type="term" value="F:signaling adaptor activity"/>
    <property type="evidence" value="ECO:0000305"/>
    <property type="project" value="WormBase"/>
</dbReference>
<dbReference type="GO" id="GO:0060070">
    <property type="term" value="P:canonical Wnt signaling pathway"/>
    <property type="evidence" value="ECO:0000318"/>
    <property type="project" value="GO_Central"/>
</dbReference>
<dbReference type="GO" id="GO:0001709">
    <property type="term" value="P:cell fate determination"/>
    <property type="evidence" value="ECO:0000315"/>
    <property type="project" value="WormBase"/>
</dbReference>
<dbReference type="GO" id="GO:0060573">
    <property type="term" value="P:cell fate specification involved in pattern specification"/>
    <property type="evidence" value="ECO:0000316"/>
    <property type="project" value="WormBase"/>
</dbReference>
<dbReference type="GO" id="GO:0016477">
    <property type="term" value="P:cell migration"/>
    <property type="evidence" value="ECO:0000315"/>
    <property type="project" value="WormBase"/>
</dbReference>
<dbReference type="GO" id="GO:0048557">
    <property type="term" value="P:embryonic digestive tract morphogenesis"/>
    <property type="evidence" value="ECO:0000316"/>
    <property type="project" value="UniProtKB"/>
</dbReference>
<dbReference type="GO" id="GO:0048598">
    <property type="term" value="P:embryonic morphogenesis"/>
    <property type="evidence" value="ECO:0000315"/>
    <property type="project" value="WormBase"/>
</dbReference>
<dbReference type="GO" id="GO:0001714">
    <property type="term" value="P:endodermal cell fate specification"/>
    <property type="evidence" value="ECO:0000316"/>
    <property type="project" value="WormBase"/>
</dbReference>
<dbReference type="GO" id="GO:0048730">
    <property type="term" value="P:epidermis morphogenesis"/>
    <property type="evidence" value="ECO:0000315"/>
    <property type="project" value="WormBase"/>
</dbReference>
<dbReference type="GO" id="GO:0000132">
    <property type="term" value="P:establishment of mitotic spindle orientation"/>
    <property type="evidence" value="ECO:0000315"/>
    <property type="project" value="WormBase"/>
</dbReference>
<dbReference type="GO" id="GO:0040039">
    <property type="term" value="P:inductive cell migration"/>
    <property type="evidence" value="ECO:0000315"/>
    <property type="project" value="WormBase"/>
</dbReference>
<dbReference type="GO" id="GO:0035556">
    <property type="term" value="P:intracellular signal transduction"/>
    <property type="evidence" value="ECO:0007669"/>
    <property type="project" value="InterPro"/>
</dbReference>
<dbReference type="GO" id="GO:0070986">
    <property type="term" value="P:left/right axis specification"/>
    <property type="evidence" value="ECO:0000316"/>
    <property type="project" value="UniProtKB"/>
</dbReference>
<dbReference type="GO" id="GO:0001764">
    <property type="term" value="P:neuron migration"/>
    <property type="evidence" value="ECO:0000315"/>
    <property type="project" value="WormBase"/>
</dbReference>
<dbReference type="GO" id="GO:0010623">
    <property type="term" value="P:programmed cell death involved in cell development"/>
    <property type="evidence" value="ECO:0000315"/>
    <property type="project" value="UniProtKB"/>
</dbReference>
<dbReference type="GO" id="GO:0032878">
    <property type="term" value="P:regulation of establishment or maintenance of cell polarity"/>
    <property type="evidence" value="ECO:0000315"/>
    <property type="project" value="WormBase"/>
</dbReference>
<dbReference type="GO" id="GO:0023019">
    <property type="term" value="P:signal transduction involved in regulation of gene expression"/>
    <property type="evidence" value="ECO:0000316"/>
    <property type="project" value="WormBase"/>
</dbReference>
<dbReference type="GO" id="GO:0060071">
    <property type="term" value="P:Wnt signaling pathway, planar cell polarity pathway"/>
    <property type="evidence" value="ECO:0000316"/>
    <property type="project" value="WormBase"/>
</dbReference>
<dbReference type="GO" id="GO:0060069">
    <property type="term" value="P:Wnt signaling pathway, regulating spindle positioning"/>
    <property type="evidence" value="ECO:0000315"/>
    <property type="project" value="WormBase"/>
</dbReference>
<dbReference type="CDD" id="cd04438">
    <property type="entry name" value="DEP_dishevelled"/>
    <property type="match status" value="1"/>
</dbReference>
<dbReference type="CDD" id="cd06717">
    <property type="entry name" value="PDZ_Dishevelled-like"/>
    <property type="match status" value="1"/>
</dbReference>
<dbReference type="FunFam" id="1.10.10.10:FF:000400">
    <property type="entry name" value="DiSHevelled related"/>
    <property type="match status" value="1"/>
</dbReference>
<dbReference type="FunFam" id="2.30.42.10:FF:000203">
    <property type="entry name" value="DiSHevelled related"/>
    <property type="match status" value="1"/>
</dbReference>
<dbReference type="Gene3D" id="2.30.42.10">
    <property type="match status" value="1"/>
</dbReference>
<dbReference type="Gene3D" id="2.40.240.130">
    <property type="match status" value="1"/>
</dbReference>
<dbReference type="Gene3D" id="1.10.10.10">
    <property type="entry name" value="Winged helix-like DNA-binding domain superfamily/Winged helix DNA-binding domain"/>
    <property type="match status" value="1"/>
</dbReference>
<dbReference type="InterPro" id="IPR000591">
    <property type="entry name" value="DEP_dom"/>
</dbReference>
<dbReference type="InterPro" id="IPR001158">
    <property type="entry name" value="DIX"/>
</dbReference>
<dbReference type="InterPro" id="IPR038207">
    <property type="entry name" value="DIX_dom_sf"/>
</dbReference>
<dbReference type="InterPro" id="IPR015506">
    <property type="entry name" value="Dsh/Dvl-rel"/>
</dbReference>
<dbReference type="InterPro" id="IPR001478">
    <property type="entry name" value="PDZ"/>
</dbReference>
<dbReference type="InterPro" id="IPR036034">
    <property type="entry name" value="PDZ_sf"/>
</dbReference>
<dbReference type="InterPro" id="IPR029071">
    <property type="entry name" value="Ubiquitin-like_domsf"/>
</dbReference>
<dbReference type="InterPro" id="IPR036388">
    <property type="entry name" value="WH-like_DNA-bd_sf"/>
</dbReference>
<dbReference type="InterPro" id="IPR036390">
    <property type="entry name" value="WH_DNA-bd_sf"/>
</dbReference>
<dbReference type="PANTHER" id="PTHR10878">
    <property type="entry name" value="SEGMENT POLARITY PROTEIN DISHEVELLED"/>
    <property type="match status" value="1"/>
</dbReference>
<dbReference type="PANTHER" id="PTHR10878:SF24">
    <property type="entry name" value="SEGMENT POLARITY PROTEIN DISHEVELLED HOMOLOG MIG-5"/>
    <property type="match status" value="1"/>
</dbReference>
<dbReference type="Pfam" id="PF00610">
    <property type="entry name" value="DEP"/>
    <property type="match status" value="1"/>
</dbReference>
<dbReference type="Pfam" id="PF00778">
    <property type="entry name" value="DIX"/>
    <property type="match status" value="1"/>
</dbReference>
<dbReference type="Pfam" id="PF00595">
    <property type="entry name" value="PDZ"/>
    <property type="match status" value="1"/>
</dbReference>
<dbReference type="SMART" id="SM00021">
    <property type="entry name" value="DAX"/>
    <property type="match status" value="1"/>
</dbReference>
<dbReference type="SMART" id="SM00049">
    <property type="entry name" value="DEP"/>
    <property type="match status" value="1"/>
</dbReference>
<dbReference type="SMART" id="SM00228">
    <property type="entry name" value="PDZ"/>
    <property type="match status" value="1"/>
</dbReference>
<dbReference type="SUPFAM" id="SSF50156">
    <property type="entry name" value="PDZ domain-like"/>
    <property type="match status" value="1"/>
</dbReference>
<dbReference type="SUPFAM" id="SSF54236">
    <property type="entry name" value="Ubiquitin-like"/>
    <property type="match status" value="1"/>
</dbReference>
<dbReference type="SUPFAM" id="SSF46785">
    <property type="entry name" value="Winged helix' DNA-binding domain"/>
    <property type="match status" value="1"/>
</dbReference>
<dbReference type="PROSITE" id="PS50186">
    <property type="entry name" value="DEP"/>
    <property type="match status" value="1"/>
</dbReference>
<dbReference type="PROSITE" id="PS50841">
    <property type="entry name" value="DIX"/>
    <property type="match status" value="1"/>
</dbReference>
<dbReference type="PROSITE" id="PS50106">
    <property type="entry name" value="PDZ"/>
    <property type="match status" value="1"/>
</dbReference>
<comment type="function">
    <text evidence="5 6 7 8 9 10 11 12">Plays a role in the signal transduction pathways mediated by multiple Wnt genes (PubMed:26795562). Functions redundantly with other dishevelled family members throughout development (PubMed:19298786, PubMed:25344071, PubMed:26460008, PubMed:26795562). During embryonic and larval development, controls cell migration and/or cell fate specification of hypodermal cells, hypodermal seam cells, vulval precursor cells and, through distal tip cell migration, somatic gonad precursor cells (PubMed:16899238, PubMed:26795562). In early embryos, regulates the orientation of the mitotic spindle of blastomeres and specifically, along with dsh-2, is required for the correct mitotic spindle orientation of the ABar blastomere division plane (PubMed:16899238, PubMed:25344071). Controls the polarity and the asymmetric localization of downstream components of the wnt/beta-catenin asymmetry pathway, and in particular, controls the asymmetric localization of the wnt receptor lin-17/Frizzled in ectodermal blast B cells (PubMed:16631156, PubMed:17196955, PubMed:19298786, PubMed:26795562). May act redundantly with dsh-2 to regulate the expression and nuclear localization of the beta-catenin homolog wrm-2, but alone seems to be required for the polarity of wrm-2 during the asymmetric cell division of hypodermal seam cells (PubMed:26795562). Also, maintains the polarity and migration of QL neuroblasts in larvae (PubMed:16899238). During the embryonic development of touch receptor neurons, may act redundantly with dsh-1, downstream of wnt signaling ligands and the wnt receptor lin-17/Frizzled, to direct the growth of neurites of touch receptor neurons towards the anterior of the body of the worm and towards the PLM touch receptor neuron and other tail neurons (PubMed:26460008). May play a role in the guidance of posterior D-type motor neuron axons along the anteroposterior axis (PubMed:19259273).</text>
</comment>
<comment type="interaction">
    <interactant intactId="EBI-316403">
        <id>Q22227</id>
    </interactant>
    <interactant intactId="EBI-2315883">
        <id>P03949</id>
        <label>abl-1</label>
    </interactant>
    <organismsDiffer>false</organismsDiffer>
    <experiments>3</experiments>
</comment>
<comment type="interaction">
    <interactant intactId="EBI-316403">
        <id>Q22227</id>
    </interactant>
    <interactant intactId="EBI-327108">
        <id>O16393</id>
        <label>CELE_C17E7.4</label>
    </interactant>
    <organismsDiffer>false</organismsDiffer>
    <experiments>3</experiments>
</comment>
<comment type="interaction">
    <interactant intactId="EBI-316403">
        <id>Q22227</id>
    </interactant>
    <interactant intactId="EBI-327154">
        <id>O01580</id>
        <label>CELE_F53F10.1</label>
    </interactant>
    <organismsDiffer>false</organismsDiffer>
    <experiments>4</experiments>
</comment>
<comment type="interaction">
    <interactant intactId="EBI-316403">
        <id>Q22227</id>
    </interactant>
    <interactant intactId="EBI-2412943">
        <id>G5EEN7</id>
        <label>CELE_Y39A1A.3</label>
    </interactant>
    <organismsDiffer>false</organismsDiffer>
    <experiments>2</experiments>
</comment>
<comment type="interaction">
    <interactant intactId="EBI-316403">
        <id>Q22227</id>
    </interactant>
    <interactant intactId="EBI-316816">
        <id>Q94392</id>
        <label>nsf-1</label>
    </interactant>
    <organismsDiffer>false</organismsDiffer>
    <experiments>3</experiments>
</comment>
<comment type="interaction">
    <interactant intactId="EBI-316403">
        <id>Q22227</id>
    </interactant>
    <interactant intactId="EBI-2917690">
        <id>O62090</id>
        <label>pry-1</label>
    </interactant>
    <organismsDiffer>false</organismsDiffer>
    <experiments>4</experiments>
</comment>
<comment type="interaction">
    <interactant intactId="EBI-316403">
        <id>Q22227</id>
    </interactant>
    <interactant intactId="EBI-320612">
        <id>G5ECG0</id>
        <label>tac-1</label>
    </interactant>
    <organismsDiffer>false</organismsDiffer>
    <experiments>3</experiments>
</comment>
<comment type="subcellular location">
    <subcellularLocation>
        <location evidence="6 7 10">Cytoplasm</location>
        <location evidence="6 7 10">Cell cortex</location>
    </subcellularLocation>
    <subcellularLocation>
        <location evidence="7">Cell membrane</location>
    </subcellularLocation>
    <subcellularLocation>
        <location evidence="10">Cell junction</location>
    </subcellularLocation>
    <subcellularLocation>
        <location evidence="6 7 12">Cytoplasm</location>
    </subcellularLocation>
    <text evidence="6 7 12">Mainly localized to the cell cortex, but localizes to the cytoplasm following dorsal intercalation during hypodermal morphogenesis (PubMed:16899238). Localizes in puncta in the cytoplasm during interphase prior to seam cell division (PubMed:26795562). Localizes in puncta in the cell cortex or cell membrane prior to and after asymmetric blast B cell division (PubMed:17196955).</text>
</comment>
<comment type="alternative products">
    <event type="alternative splicing"/>
    <isoform>
        <id>Q22227-1</id>
        <name evidence="15">a</name>
        <sequence type="displayed"/>
    </isoform>
    <isoform>
        <id>Q22227-2</id>
        <name evidence="16">b</name>
        <sequence type="described" ref="VSP_058544"/>
    </isoform>
    <isoform>
        <id>Q22227-3</id>
        <name evidence="17">c</name>
        <sequence type="described" ref="VSP_058543 VSP_058544"/>
    </isoform>
</comment>
<comment type="developmental stage">
    <text evidence="5 6">Expressed throughout embryonic and larval development (PubMed:16899238). Expressed in most embryonic cells during hypodermal morphogenesis, and in Z1 and Z4 distal tip precursor cells, in distal tips cells during gonadal migration and in the gonandal primordium, which become vulval precursor cells, during larval development (PubMed:16899238). Also expressed in hypodermal precursor cells P11 and P12 and their daughter cells P11.a, P11.p, P12.a and P12.p, and in the SDQL and PVM neurons which are derived from the QL neuroblast (PubMed:16899238). During larval development, expressed in blast B cells and its descendants, the QL cell and in cells in the nerve ring (PubMed:16631156).</text>
</comment>
<comment type="domain">
    <text evidence="7">The DEP domain is required for cell membrane localization.</text>
</comment>
<comment type="disruption phenotype">
    <text evidence="6 7 12">Embryonic and larval cell fate, polarity, division and migration defects (PubMed:16899238, PubMed:17196955, PubMed:26795562). In several lineages of the developing gonad 42.6% of hermaphrodites do not have either one or both distal tip cells, which results in the absence of the corresponding gonad arm, and germline proliferation defects in the male germ line (PubMed:16899238). Defects in hypodermal morphogenesis including disorganized dorsal cell intercalation, eventually resulting in 2-fold stage arrest, and failed ventral enclosure in some worms (PubMed:16899238). Cell polarity and migration defects including mitotic spindle misalignment, particularly in the ABar blastomere which results in the posterior cells of the blastomere adopting an alternate more anterior position (PubMed:16899238). Defective QL neuroblast migration with 100% of descendants migrating towards the anterior rather than the posterior of larvae (PubMed:16899238). Disrupted asymmetric cell divisions of hypodermal seam cells with the mislocalization and reduced expression of a wnt/beta catenin pathway component sys-1 and its negative regulator apr-1, and wrm-1 in daughter seam cells (PubMed:26795562). Irregular symmetric localization of lin-17/Frizzled in ectodermal blast B cells (PubMed:17196955).</text>
</comment>
<comment type="similarity">
    <text evidence="13">Belongs to the DSH family.</text>
</comment>
<accession>Q22227</accession>
<accession>G5EC49</accession>
<accession>O76471</accession>
<accession>Q95ZQ0</accession>